<protein>
    <recommendedName>
        <fullName>CLIP-associating protein 2</fullName>
    </recommendedName>
    <alternativeName>
        <fullName>Cytoplasmic linker-associated protein 2</fullName>
    </alternativeName>
</protein>
<organism>
    <name type="scientific">Rattus norvegicus</name>
    <name type="common">Rat</name>
    <dbReference type="NCBI Taxonomy" id="10116"/>
    <lineage>
        <taxon>Eukaryota</taxon>
        <taxon>Metazoa</taxon>
        <taxon>Chordata</taxon>
        <taxon>Craniata</taxon>
        <taxon>Vertebrata</taxon>
        <taxon>Euteleostomi</taxon>
        <taxon>Mammalia</taxon>
        <taxon>Eutheria</taxon>
        <taxon>Euarchontoglires</taxon>
        <taxon>Glires</taxon>
        <taxon>Rodentia</taxon>
        <taxon>Myomorpha</taxon>
        <taxon>Muroidea</taxon>
        <taxon>Muridae</taxon>
        <taxon>Murinae</taxon>
        <taxon>Rattus</taxon>
    </lineage>
</organism>
<accession>Q99JD4</accession>
<sequence length="1286" mass="140638">MRRLICKRICDYKSFDDEESVDGNRPSSAASAFKVPAPKTPGNPVNSARKPGSAGGPKAGGTSKEGGAGAVDEDDFIKAFTDVPSIQIYSSRELEETLNKIREILSDDKHDWDQRANALKKIRSLLVAGAAQYDCFFQHLRLLDGALKLSAKDLRSQVVREACITVAHLSTVLGNKFDHGAEAIVPTLFNLVPNSAKVMATSGCAAIRFIIRHTHVPRLIPLITSNCTSKSVPVRRRSFEFLDLLLQEWQTHSLERHAAVLVETIKKGIHDADAEARVEARKTYMGLRNHFPGEAETLYNSLEPSYQKSLQTYLKSSGSVASLPQSDRSSSSSQESLNRPFSSKWSTANPSAVAGRVSVGGSKASPLPGSLQRSRSDIDVNAAAGAKAHHAAGQAVRSGRLGAGALNPGSYASLEDTSDKMDGTASEDGRVRAKLSTPLVAVGNAKTDSRGRSRTKMVSQSQPGSRSGSPGRVLTTTALSTVSSGAQRILVNSASAQKRSKIPRSQGCSREASPSRLSVARSSRIPRPSVSQGCSREASRESSRDTSPVRSFQPLGPGYGMSQSSRLSSSVSAMRVLNTGSDVEEAVADALLLGDIRTKKKPARRRYESYGMHSDDDANSDASSACSERSYSSRNGSIPTYMRQTEDVAEVLNRCASSNWSERKEGLLGLQNLLKNQRTLSRVELKRLCEIFTRMFADPHGKVFSMFLETLVDFIQVHKDDLQDWLFVLLTQLLKKMGADLLGSVQAKVQKALDVTRESFPNDLQFNILMRFTVDQTQTPSLKVKVAILKYIETLAKQMDPGDFINSSETRLAVSRVITWTTEPKSSDVRKAAQSVLISLFELNTPEFTMLLGALPKTFQDGATKLLHNHLRNTGNGTQSSMGSPLTRPTPRSPANWSSPLTSPTNTSQNTLSPSAFDYDTENMNSEDIYSSLRGVTEAIQNFSFRSQEDMSEPLKRDPKKEDGDTVCSGPGMSDPRAGGDAPDSSQPALDNKASLLHSVPLHSSPRSRDYNPYNYSDSISPFNKSALKEAMFDDDADQFPDDLSLDHSDLVAELLKELSNHNERIEERKIALYELMKLTQEESFSVWDEHFKTILLLLLETLGDKEPTIRALALKVLKEILRHQPARFKNYAELTVMKTLEAHKDPHKEVVRSAEEAASVLATSISPEQCIKVLCPIIQTADYPINLAAIKMQTKVIERVSKETLNLLLPEIMPGLIQGYDNSESSVRKACVFCLVAVHAVIGDELKPHLSQLTGSKMKLLNLYIKRAQTGSAGADPTTDVSGQS</sequence>
<gene>
    <name type="primary">Clasp2</name>
</gene>
<dbReference type="EMBL" id="AJ288060">
    <property type="protein sequence ID" value="CAC35166.1"/>
    <property type="molecule type" value="mRNA"/>
</dbReference>
<dbReference type="RefSeq" id="NP_446174.1">
    <property type="nucleotide sequence ID" value="NM_053722.2"/>
</dbReference>
<dbReference type="BioGRID" id="250360">
    <property type="interactions" value="4"/>
</dbReference>
<dbReference type="FunCoup" id="Q99JD4">
    <property type="interactions" value="4370"/>
</dbReference>
<dbReference type="IntAct" id="Q99JD4">
    <property type="interactions" value="2"/>
</dbReference>
<dbReference type="MINT" id="Q99JD4"/>
<dbReference type="STRING" id="10116.ENSRNOP00000071109"/>
<dbReference type="iPTMnet" id="Q99JD4"/>
<dbReference type="PhosphoSitePlus" id="Q99JD4"/>
<dbReference type="jPOST" id="Q99JD4"/>
<dbReference type="PaxDb" id="10116-ENSRNOP00000012545"/>
<dbReference type="GeneID" id="114514"/>
<dbReference type="KEGG" id="rno:114514"/>
<dbReference type="UCSC" id="RGD:619789">
    <property type="organism name" value="rat"/>
</dbReference>
<dbReference type="AGR" id="RGD:619789"/>
<dbReference type="CTD" id="23122"/>
<dbReference type="RGD" id="619789">
    <property type="gene designation" value="Clasp2"/>
</dbReference>
<dbReference type="VEuPathDB" id="HostDB:ENSRNOG00000009161"/>
<dbReference type="eggNOG" id="KOG2956">
    <property type="taxonomic scope" value="Eukaryota"/>
</dbReference>
<dbReference type="HOGENOM" id="CLU_005060_0_0_1"/>
<dbReference type="InParanoid" id="Q99JD4"/>
<dbReference type="Reactome" id="R-RNO-141444">
    <property type="pathway name" value="Amplification of signal from unattached kinetochores via a MAD2 inhibitory signal"/>
</dbReference>
<dbReference type="Reactome" id="R-RNO-2467813">
    <property type="pathway name" value="Separation of Sister Chromatids"/>
</dbReference>
<dbReference type="Reactome" id="R-RNO-2500257">
    <property type="pathway name" value="Resolution of Sister Chromatid Cohesion"/>
</dbReference>
<dbReference type="Reactome" id="R-RNO-5663220">
    <property type="pathway name" value="RHO GTPases Activate Formins"/>
</dbReference>
<dbReference type="Reactome" id="R-RNO-68877">
    <property type="pathway name" value="Mitotic Prometaphase"/>
</dbReference>
<dbReference type="Reactome" id="R-RNO-9648025">
    <property type="pathway name" value="EML4 and NUDC in mitotic spindle formation"/>
</dbReference>
<dbReference type="PRO" id="PR:Q99JD4"/>
<dbReference type="Proteomes" id="UP000002494">
    <property type="component" value="Chromosome 8"/>
</dbReference>
<dbReference type="Bgee" id="ENSRNOG00000009161">
    <property type="expression patterns" value="Expressed in cerebellum and 20 other cell types or tissues"/>
</dbReference>
<dbReference type="ExpressionAtlas" id="Q99JD4">
    <property type="expression patterns" value="baseline and differential"/>
</dbReference>
<dbReference type="GO" id="GO:0045180">
    <property type="term" value="C:basal cortex"/>
    <property type="evidence" value="ECO:0000266"/>
    <property type="project" value="RGD"/>
</dbReference>
<dbReference type="GO" id="GO:0005938">
    <property type="term" value="C:cell cortex"/>
    <property type="evidence" value="ECO:0000266"/>
    <property type="project" value="RGD"/>
</dbReference>
<dbReference type="GO" id="GO:0031252">
    <property type="term" value="C:cell leading edge"/>
    <property type="evidence" value="ECO:0000250"/>
    <property type="project" value="UniProtKB"/>
</dbReference>
<dbReference type="GO" id="GO:0005813">
    <property type="term" value="C:centrosome"/>
    <property type="evidence" value="ECO:0007669"/>
    <property type="project" value="UniProtKB-SubCell"/>
</dbReference>
<dbReference type="GO" id="GO:0005881">
    <property type="term" value="C:cytoplasmic microtubule"/>
    <property type="evidence" value="ECO:0000250"/>
    <property type="project" value="UniProtKB"/>
</dbReference>
<dbReference type="GO" id="GO:0005925">
    <property type="term" value="C:focal adhesion"/>
    <property type="evidence" value="ECO:0000266"/>
    <property type="project" value="RGD"/>
</dbReference>
<dbReference type="GO" id="GO:0098978">
    <property type="term" value="C:glutamatergic synapse"/>
    <property type="evidence" value="ECO:0000266"/>
    <property type="project" value="RGD"/>
</dbReference>
<dbReference type="GO" id="GO:0005794">
    <property type="term" value="C:Golgi apparatus"/>
    <property type="evidence" value="ECO:0000250"/>
    <property type="project" value="UniProtKB"/>
</dbReference>
<dbReference type="GO" id="GO:0000776">
    <property type="term" value="C:kinetochore"/>
    <property type="evidence" value="ECO:0000266"/>
    <property type="project" value="RGD"/>
</dbReference>
<dbReference type="GO" id="GO:0005874">
    <property type="term" value="C:microtubule"/>
    <property type="evidence" value="ECO:0000314"/>
    <property type="project" value="RGD"/>
</dbReference>
<dbReference type="GO" id="GO:0015630">
    <property type="term" value="C:microtubule cytoskeleton"/>
    <property type="evidence" value="ECO:0000266"/>
    <property type="project" value="RGD"/>
</dbReference>
<dbReference type="GO" id="GO:0005815">
    <property type="term" value="C:microtubule organizing center"/>
    <property type="evidence" value="ECO:0000318"/>
    <property type="project" value="GO_Central"/>
</dbReference>
<dbReference type="GO" id="GO:0072686">
    <property type="term" value="C:mitotic spindle"/>
    <property type="evidence" value="ECO:0000266"/>
    <property type="project" value="RGD"/>
</dbReference>
<dbReference type="GO" id="GO:0005886">
    <property type="term" value="C:plasma membrane"/>
    <property type="evidence" value="ECO:0000250"/>
    <property type="project" value="UniProtKB"/>
</dbReference>
<dbReference type="GO" id="GO:0032587">
    <property type="term" value="C:ruffle membrane"/>
    <property type="evidence" value="ECO:0000314"/>
    <property type="project" value="RGD"/>
</dbReference>
<dbReference type="GO" id="GO:0005876">
    <property type="term" value="C:spindle microtubule"/>
    <property type="evidence" value="ECO:0000318"/>
    <property type="project" value="GO_Central"/>
</dbReference>
<dbReference type="GO" id="GO:0005802">
    <property type="term" value="C:trans-Golgi network"/>
    <property type="evidence" value="ECO:0000250"/>
    <property type="project" value="UniProtKB"/>
</dbReference>
<dbReference type="GO" id="GO:0002162">
    <property type="term" value="F:dystroglycan binding"/>
    <property type="evidence" value="ECO:0000266"/>
    <property type="project" value="RGD"/>
</dbReference>
<dbReference type="GO" id="GO:0008017">
    <property type="term" value="F:microtubule binding"/>
    <property type="evidence" value="ECO:0000314"/>
    <property type="project" value="RGD"/>
</dbReference>
<dbReference type="GO" id="GO:0051010">
    <property type="term" value="F:microtubule plus-end binding"/>
    <property type="evidence" value="ECO:0000250"/>
    <property type="project" value="UniProtKB"/>
</dbReference>
<dbReference type="GO" id="GO:1990782">
    <property type="term" value="F:protein tyrosine kinase binding"/>
    <property type="evidence" value="ECO:0000266"/>
    <property type="project" value="RGD"/>
</dbReference>
<dbReference type="GO" id="GO:0051301">
    <property type="term" value="P:cell division"/>
    <property type="evidence" value="ECO:0007669"/>
    <property type="project" value="UniProtKB-KW"/>
</dbReference>
<dbReference type="GO" id="GO:0016477">
    <property type="term" value="P:cell migration"/>
    <property type="evidence" value="ECO:0000266"/>
    <property type="project" value="RGD"/>
</dbReference>
<dbReference type="GO" id="GO:0032869">
    <property type="term" value="P:cellular response to insulin stimulus"/>
    <property type="evidence" value="ECO:0000270"/>
    <property type="project" value="RGD"/>
</dbReference>
<dbReference type="GO" id="GO:0030010">
    <property type="term" value="P:establishment of cell polarity"/>
    <property type="evidence" value="ECO:0000266"/>
    <property type="project" value="RGD"/>
</dbReference>
<dbReference type="GO" id="GO:0040001">
    <property type="term" value="P:establishment of mitotic spindle localization"/>
    <property type="evidence" value="ECO:0000318"/>
    <property type="project" value="GO_Central"/>
</dbReference>
<dbReference type="GO" id="GO:0007163">
    <property type="term" value="P:establishment or maintenance of cell polarity"/>
    <property type="evidence" value="ECO:0000266"/>
    <property type="project" value="RGD"/>
</dbReference>
<dbReference type="GO" id="GO:0010458">
    <property type="term" value="P:exit from mitosis"/>
    <property type="evidence" value="ECO:0000250"/>
    <property type="project" value="UniProtKB"/>
</dbReference>
<dbReference type="GO" id="GO:0010761">
    <property type="term" value="P:fibroblast migration"/>
    <property type="evidence" value="ECO:0000266"/>
    <property type="project" value="RGD"/>
</dbReference>
<dbReference type="GO" id="GO:0007030">
    <property type="term" value="P:Golgi organization"/>
    <property type="evidence" value="ECO:0000250"/>
    <property type="project" value="UniProtKB"/>
</dbReference>
<dbReference type="GO" id="GO:0034453">
    <property type="term" value="P:microtubule anchoring"/>
    <property type="evidence" value="ECO:0000250"/>
    <property type="project" value="UniProtKB"/>
</dbReference>
<dbReference type="GO" id="GO:0000226">
    <property type="term" value="P:microtubule cytoskeleton organization"/>
    <property type="evidence" value="ECO:0000250"/>
    <property type="project" value="UniProtKB"/>
</dbReference>
<dbReference type="GO" id="GO:0007019">
    <property type="term" value="P:microtubule depolymerization"/>
    <property type="evidence" value="ECO:0000266"/>
    <property type="project" value="RGD"/>
</dbReference>
<dbReference type="GO" id="GO:0007020">
    <property type="term" value="P:microtubule nucleation"/>
    <property type="evidence" value="ECO:0000250"/>
    <property type="project" value="UniProtKB"/>
</dbReference>
<dbReference type="GO" id="GO:0031023">
    <property type="term" value="P:microtubule organizing center organization"/>
    <property type="evidence" value="ECO:0000250"/>
    <property type="project" value="UniProtKB"/>
</dbReference>
<dbReference type="GO" id="GO:0090307">
    <property type="term" value="P:mitotic spindle assembly"/>
    <property type="evidence" value="ECO:0000318"/>
    <property type="project" value="GO_Central"/>
</dbReference>
<dbReference type="GO" id="GO:0007052">
    <property type="term" value="P:mitotic spindle organization"/>
    <property type="evidence" value="ECO:0000250"/>
    <property type="project" value="UniProtKB"/>
</dbReference>
<dbReference type="GO" id="GO:0051895">
    <property type="term" value="P:negative regulation of focal adhesion assembly"/>
    <property type="evidence" value="ECO:0000266"/>
    <property type="project" value="RGD"/>
</dbReference>
<dbReference type="GO" id="GO:0007026">
    <property type="term" value="P:negative regulation of microtubule depolymerization"/>
    <property type="evidence" value="ECO:0000314"/>
    <property type="project" value="RGD"/>
</dbReference>
<dbReference type="GO" id="GO:0051497">
    <property type="term" value="P:negative regulation of stress fiber assembly"/>
    <property type="evidence" value="ECO:0000266"/>
    <property type="project" value="RGD"/>
</dbReference>
<dbReference type="GO" id="GO:1903690">
    <property type="term" value="P:negative regulation of wound healing, spreading of epidermal cells"/>
    <property type="evidence" value="ECO:0000266"/>
    <property type="project" value="RGD"/>
</dbReference>
<dbReference type="GO" id="GO:1904261">
    <property type="term" value="P:positive regulation of basement membrane assembly involved in embryonic body morphogenesis"/>
    <property type="evidence" value="ECO:0000266"/>
    <property type="project" value="RGD"/>
</dbReference>
<dbReference type="GO" id="GO:0010634">
    <property type="term" value="P:positive regulation of epithelial cell migration"/>
    <property type="evidence" value="ECO:0000266"/>
    <property type="project" value="RGD"/>
</dbReference>
<dbReference type="GO" id="GO:0045921">
    <property type="term" value="P:positive regulation of exocytosis"/>
    <property type="evidence" value="ECO:0000266"/>
    <property type="project" value="RGD"/>
</dbReference>
<dbReference type="GO" id="GO:0090091">
    <property type="term" value="P:positive regulation of extracellular matrix disassembly"/>
    <property type="evidence" value="ECO:0000266"/>
    <property type="project" value="RGD"/>
</dbReference>
<dbReference type="GO" id="GO:1905477">
    <property type="term" value="P:positive regulation of protein localization to membrane"/>
    <property type="evidence" value="ECO:0000315"/>
    <property type="project" value="RGD"/>
</dbReference>
<dbReference type="GO" id="GO:0099187">
    <property type="term" value="P:presynaptic cytoskeleton organization"/>
    <property type="evidence" value="ECO:0000266"/>
    <property type="project" value="RGD"/>
</dbReference>
<dbReference type="GO" id="GO:0072659">
    <property type="term" value="P:protein localization to plasma membrane"/>
    <property type="evidence" value="ECO:0000266"/>
    <property type="project" value="RGD"/>
</dbReference>
<dbReference type="GO" id="GO:0010717">
    <property type="term" value="P:regulation of epithelial to mesenchymal transition"/>
    <property type="evidence" value="ECO:0000266"/>
    <property type="project" value="RGD"/>
</dbReference>
<dbReference type="GO" id="GO:0010470">
    <property type="term" value="P:regulation of gastrulation"/>
    <property type="evidence" value="ECO:0000266"/>
    <property type="project" value="RGD"/>
</dbReference>
<dbReference type="GO" id="GO:0031110">
    <property type="term" value="P:regulation of microtubule polymerization or depolymerization"/>
    <property type="evidence" value="ECO:0000266"/>
    <property type="project" value="RGD"/>
</dbReference>
<dbReference type="GO" id="GO:0032886">
    <property type="term" value="P:regulation of microtubule-based process"/>
    <property type="evidence" value="ECO:0000250"/>
    <property type="project" value="UniProtKB"/>
</dbReference>
<dbReference type="GO" id="GO:0006903">
    <property type="term" value="P:vesicle targeting"/>
    <property type="evidence" value="ECO:0000266"/>
    <property type="project" value="RGD"/>
</dbReference>
<dbReference type="FunFam" id="1.25.10.10:FF:000001">
    <property type="entry name" value="CLIP-associating protein 1 isoform 2"/>
    <property type="match status" value="1"/>
</dbReference>
<dbReference type="FunFam" id="1.25.10.10:FF:000005">
    <property type="entry name" value="CLIP-associating protein 1 isoform 2"/>
    <property type="match status" value="1"/>
</dbReference>
<dbReference type="FunFam" id="1.25.10.10:FF:000006">
    <property type="entry name" value="CLIP-associating protein 1 isoform 2"/>
    <property type="match status" value="1"/>
</dbReference>
<dbReference type="Gene3D" id="1.25.10.10">
    <property type="entry name" value="Leucine-rich Repeat Variant"/>
    <property type="match status" value="3"/>
</dbReference>
<dbReference type="InterPro" id="IPR011989">
    <property type="entry name" value="ARM-like"/>
</dbReference>
<dbReference type="InterPro" id="IPR016024">
    <property type="entry name" value="ARM-type_fold"/>
</dbReference>
<dbReference type="InterPro" id="IPR024395">
    <property type="entry name" value="CLASP_N_dom"/>
</dbReference>
<dbReference type="InterPro" id="IPR034085">
    <property type="entry name" value="TOG"/>
</dbReference>
<dbReference type="PANTHER" id="PTHR21567">
    <property type="entry name" value="CLASP"/>
    <property type="match status" value="1"/>
</dbReference>
<dbReference type="PANTHER" id="PTHR21567:SF30">
    <property type="entry name" value="CLIP-ASSOCIATING PROTEIN 2"/>
    <property type="match status" value="1"/>
</dbReference>
<dbReference type="Pfam" id="PF21040">
    <property type="entry name" value="CEP104-like_TOG"/>
    <property type="match status" value="1"/>
</dbReference>
<dbReference type="Pfam" id="PF12348">
    <property type="entry name" value="CLASP_N"/>
    <property type="match status" value="1"/>
</dbReference>
<dbReference type="SMART" id="SM01349">
    <property type="entry name" value="TOG"/>
    <property type="match status" value="3"/>
</dbReference>
<dbReference type="SUPFAM" id="SSF48371">
    <property type="entry name" value="ARM repeat"/>
    <property type="match status" value="1"/>
</dbReference>
<feature type="chain" id="PRO_0000089851" description="CLIP-associating protein 2">
    <location>
        <begin position="1"/>
        <end position="1286"/>
    </location>
</feature>
<feature type="repeat" description="HEAT 1" evidence="4">
    <location>
        <begin position="179"/>
        <end position="214"/>
    </location>
</feature>
<feature type="repeat" description="HEAT 2" evidence="4">
    <location>
        <begin position="215"/>
        <end position="251"/>
    </location>
</feature>
<feature type="repeat" description="HEAT 3" evidence="4">
    <location>
        <begin position="256"/>
        <end position="293"/>
    </location>
</feature>
<feature type="repeat" description="HEAT 4" evidence="4">
    <location>
        <begin position="702"/>
        <end position="739"/>
    </location>
</feature>
<feature type="repeat" description="HEAT 5" evidence="4">
    <location>
        <begin position="764"/>
        <end position="801"/>
    </location>
</feature>
<feature type="repeat" description="HEAT 6" evidence="4">
    <location>
        <begin position="1046"/>
        <end position="1083"/>
    </location>
</feature>
<feature type="repeat" description="HEAT 7" evidence="4">
    <location>
        <begin position="1090"/>
        <end position="1127"/>
    </location>
</feature>
<feature type="repeat" description="HEAT 8" evidence="4">
    <location>
        <begin position="1208"/>
        <end position="1245"/>
    </location>
</feature>
<feature type="region of interest" description="Golgi localization" evidence="1">
    <location>
        <begin position="1"/>
        <end position="40"/>
    </location>
</feature>
<feature type="region of interest" description="Disordered" evidence="5">
    <location>
        <begin position="17"/>
        <end position="70"/>
    </location>
</feature>
<feature type="region of interest" description="TOG 1" evidence="2">
    <location>
        <begin position="66"/>
        <end position="317"/>
    </location>
</feature>
<feature type="region of interest" description="Disordered" evidence="5">
    <location>
        <begin position="320"/>
        <end position="350"/>
    </location>
</feature>
<feature type="region of interest" description="Disordered" evidence="5">
    <location>
        <begin position="355"/>
        <end position="374"/>
    </location>
</feature>
<feature type="region of interest" description="Disordered" evidence="5">
    <location>
        <begin position="410"/>
        <end position="473"/>
    </location>
</feature>
<feature type="region of interest" description="Interaction with microtubules, MAPRE1 and MAPRE3" evidence="1">
    <location>
        <begin position="450"/>
        <end position="565"/>
    </location>
</feature>
<feature type="region of interest" description="Disordered" evidence="5">
    <location>
        <begin position="492"/>
        <end position="566"/>
    </location>
</feature>
<feature type="region of interest" description="Disordered" evidence="5">
    <location>
        <begin position="606"/>
        <end position="638"/>
    </location>
</feature>
<feature type="region of interest" description="TOG 2" evidence="2">
    <location>
        <begin position="642"/>
        <end position="873"/>
    </location>
</feature>
<feature type="region of interest" description="Interaction with RSN and localization to the Golgi and kinetochores" evidence="1">
    <location>
        <begin position="864"/>
        <end position="1286"/>
    </location>
</feature>
<feature type="region of interest" description="Disordered" evidence="5">
    <location>
        <begin position="870"/>
        <end position="920"/>
    </location>
</feature>
<feature type="region of interest" description="Disordered" evidence="5">
    <location>
        <begin position="944"/>
        <end position="990"/>
    </location>
</feature>
<feature type="region of interest" description="Required for cortical localization" evidence="1">
    <location>
        <begin position="1009"/>
        <end position="1286"/>
    </location>
</feature>
<feature type="short sequence motif" description="SXIP motif 1; mediates interaction with MAPRE1 and targeting to microtubule plus ends" evidence="2">
    <location>
        <begin position="500"/>
        <end position="503"/>
    </location>
</feature>
<feature type="short sequence motif" description="SXIP motif 2; mediates interaction with MAPRE1 and targeting to microtubule plus ends" evidence="2">
    <location>
        <begin position="523"/>
        <end position="526"/>
    </location>
</feature>
<feature type="compositionally biased region" description="Gly residues" evidence="5">
    <location>
        <begin position="53"/>
        <end position="69"/>
    </location>
</feature>
<feature type="compositionally biased region" description="Low complexity" evidence="5">
    <location>
        <begin position="322"/>
        <end position="340"/>
    </location>
</feature>
<feature type="compositionally biased region" description="Polar residues" evidence="5">
    <location>
        <begin position="341"/>
        <end position="350"/>
    </location>
</feature>
<feature type="compositionally biased region" description="Basic and acidic residues" evidence="5">
    <location>
        <begin position="417"/>
        <end position="431"/>
    </location>
</feature>
<feature type="compositionally biased region" description="Low complexity" evidence="5">
    <location>
        <begin position="459"/>
        <end position="473"/>
    </location>
</feature>
<feature type="compositionally biased region" description="Basic and acidic residues" evidence="5">
    <location>
        <begin position="606"/>
        <end position="616"/>
    </location>
</feature>
<feature type="compositionally biased region" description="Low complexity" evidence="5">
    <location>
        <begin position="620"/>
        <end position="634"/>
    </location>
</feature>
<feature type="compositionally biased region" description="Polar residues" evidence="5">
    <location>
        <begin position="872"/>
        <end position="884"/>
    </location>
</feature>
<feature type="compositionally biased region" description="Polar residues" evidence="5">
    <location>
        <begin position="893"/>
        <end position="914"/>
    </location>
</feature>
<feature type="compositionally biased region" description="Basic and acidic residues" evidence="5">
    <location>
        <begin position="947"/>
        <end position="964"/>
    </location>
</feature>
<feature type="modified residue" description="Phosphoserine" evidence="7">
    <location>
        <position position="14"/>
    </location>
</feature>
<feature type="modified residue" description="Phosphoserine" evidence="7">
    <location>
        <position position="20"/>
    </location>
</feature>
<feature type="modified residue" description="Phosphoserine" evidence="2">
    <location>
        <position position="322"/>
    </location>
</feature>
<feature type="modified residue" description="Phosphoserine" evidence="7">
    <location>
        <position position="333"/>
    </location>
</feature>
<feature type="modified residue" description="Phosphoserine" evidence="2">
    <location>
        <position position="336"/>
    </location>
</feature>
<feature type="modified residue" description="Phosphoserine" evidence="3">
    <location>
        <position position="374"/>
    </location>
</feature>
<feature type="modified residue" description="Phosphoserine" evidence="2">
    <location>
        <position position="376"/>
    </location>
</feature>
<feature type="modified residue" description="Phosphoserine" evidence="7">
    <location>
        <position position="413"/>
    </location>
</feature>
<feature type="modified residue" description="Phosphoserine" evidence="2">
    <location>
        <position position="461"/>
    </location>
</feature>
<feature type="modified residue" description="Phosphoserine" evidence="2">
    <location>
        <position position="465"/>
    </location>
</feature>
<feature type="modified residue" description="Phosphoserine" evidence="2">
    <location>
        <position position="469"/>
    </location>
</feature>
<feature type="modified residue" description="Phosphoserine" evidence="2">
    <location>
        <position position="484"/>
    </location>
</feature>
<feature type="modified residue" description="Phosphoserine" evidence="2">
    <location>
        <position position="495"/>
    </location>
</feature>
<feature type="modified residue" description="Phosphoserine" evidence="2">
    <location>
        <position position="513"/>
    </location>
</feature>
<feature type="modified residue" description="Phosphoserine" evidence="2">
    <location>
        <position position="531"/>
    </location>
</feature>
<feature type="modified residue" description="Phosphoserine" evidence="7">
    <location>
        <position position="535"/>
    </location>
</feature>
<feature type="modified residue" description="Phosphoserine" evidence="2">
    <location>
        <position position="570"/>
    </location>
</feature>
<feature type="modified residue" description="Phosphoserine" evidence="2">
    <location>
        <position position="572"/>
    </location>
</feature>
<feature type="modified residue" description="Phosphoserine" evidence="7">
    <location>
        <position position="581"/>
    </location>
</feature>
<feature type="modified residue" description="Phosphoserine" evidence="2">
    <location>
        <position position="614"/>
    </location>
</feature>
<feature type="modified residue" description="Phosphoserine" evidence="3">
    <location>
        <position position="620"/>
    </location>
</feature>
<feature type="modified residue" description="Phosphothreonine" evidence="2">
    <location>
        <position position="779"/>
    </location>
</feature>
<feature type="modified residue" description="Phosphoserine" evidence="2">
    <location>
        <position position="884"/>
    </location>
</feature>
<feature type="modified residue" description="Phosphoserine" evidence="2">
    <location>
        <position position="944"/>
    </location>
</feature>
<feature type="modified residue" description="Phosphoserine" evidence="7">
    <location>
        <position position="947"/>
    </location>
</feature>
<feature type="modified residue" description="Phosphoserine" evidence="2">
    <location>
        <position position="1005"/>
    </location>
</feature>
<feature type="modified residue" description="Phosphoserine" evidence="2">
    <location>
        <position position="1021"/>
    </location>
</feature>
<proteinExistence type="evidence at protein level"/>
<name>CLAP2_RAT</name>
<reference key="1">
    <citation type="journal article" date="2001" name="Cell">
        <title>Clasps are CLIP-115 and -170 associating proteins involved in the regional regulation of microtubule dynamics in motile fibroblasts.</title>
        <authorList>
            <person name="Akhmanova A."/>
            <person name="Hoogenraad C.C."/>
            <person name="Drabek K."/>
            <person name="Stepanova T."/>
            <person name="Dortland B."/>
            <person name="Verkerk T."/>
            <person name="Vermeulen W."/>
            <person name="Burgering B.M."/>
            <person name="de Zeeuw C.I."/>
            <person name="Grosveld F."/>
            <person name="Galjart N."/>
        </authorList>
    </citation>
    <scope>NUCLEOTIDE SEQUENCE [MRNA]</scope>
</reference>
<reference key="2">
    <citation type="journal article" date="2012" name="Nat. Commun.">
        <title>Quantitative maps of protein phosphorylation sites across 14 different rat organs and tissues.</title>
        <authorList>
            <person name="Lundby A."/>
            <person name="Secher A."/>
            <person name="Lage K."/>
            <person name="Nordsborg N.B."/>
            <person name="Dmytriyev A."/>
            <person name="Lundby C."/>
            <person name="Olsen J.V."/>
        </authorList>
    </citation>
    <scope>PHOSPHORYLATION [LARGE SCALE ANALYSIS] AT SER-14; SER-20; SER-333; SER-413; SER-535; SER-581 AND SER-947</scope>
    <scope>IDENTIFICATION BY MASS SPECTROMETRY [LARGE SCALE ANALYSIS]</scope>
</reference>
<keyword id="KW-0131">Cell cycle</keyword>
<keyword id="KW-0132">Cell division</keyword>
<keyword id="KW-1003">Cell membrane</keyword>
<keyword id="KW-0966">Cell projection</keyword>
<keyword id="KW-0137">Centromere</keyword>
<keyword id="KW-0158">Chromosome</keyword>
<keyword id="KW-0963">Cytoplasm</keyword>
<keyword id="KW-0206">Cytoskeleton</keyword>
<keyword id="KW-0333">Golgi apparatus</keyword>
<keyword id="KW-0995">Kinetochore</keyword>
<keyword id="KW-0472">Membrane</keyword>
<keyword id="KW-0493">Microtubule</keyword>
<keyword id="KW-0498">Mitosis</keyword>
<keyword id="KW-0597">Phosphoprotein</keyword>
<keyword id="KW-1185">Reference proteome</keyword>
<keyword id="KW-0677">Repeat</keyword>
<evidence type="ECO:0000250" key="1"/>
<evidence type="ECO:0000250" key="2">
    <source>
        <dbReference type="UniProtKB" id="O75122"/>
    </source>
</evidence>
<evidence type="ECO:0000250" key="3">
    <source>
        <dbReference type="UniProtKB" id="Q8BRT1"/>
    </source>
</evidence>
<evidence type="ECO:0000255" key="4"/>
<evidence type="ECO:0000256" key="5">
    <source>
        <dbReference type="SAM" id="MobiDB-lite"/>
    </source>
</evidence>
<evidence type="ECO:0000305" key="6"/>
<evidence type="ECO:0007744" key="7">
    <source>
    </source>
</evidence>
<comment type="function">
    <text evidence="2">Microtubule plus-end tracking protein that promotes the stabilization of dynamic microtubules. Involved in the nucleation of noncentrosomal microtubules originating from the trans-Golgi network (TGN). Required for the polarization of the cytoplasmic microtubule arrays in migrating cells towards the leading edge of the cell. May act at the cell cortex to enhance the frequency of rescue of depolymerizing microtubules by attaching their plus-ends to cortical platforms composed of ERC1 and PHLDB2. This cortical microtubule stabilizing activity is regulated at least in part by phosphatidylinositol 3-kinase signaling. Also performs a similar stabilizing function at the kinetochore which is essential for the bipolar alignment of chromosomes on the mitotic spindle. Acts as a mediator of ERBB2-dependent stabilization of microtubules at the cell cortex.</text>
</comment>
<comment type="subunit">
    <text evidence="2 3">Interacts with microtubules. Interacts with MAPRE1; probably required for targeting to the growing microtubule plus ends. Interacts with CLIP2, ERC1, MAPRE3, PHLDB2 and RSN. The interaction with ERC1 may be mediated by PHLDB2. Interacts with GCC2; recruits CLASP2 to Golgi membranes (By similarity). Interacts with MACF1 (By similarity). Interacts with SOGA1 and MTCL1 (By similarity).</text>
</comment>
<comment type="subcellular location">
    <subcellularLocation>
        <location evidence="2">Cytoplasm</location>
        <location evidence="2">Cytoskeleton</location>
    </subcellularLocation>
    <subcellularLocation>
        <location evidence="2">Cytoplasm</location>
        <location evidence="2">Cytoskeleton</location>
        <location evidence="2">Microtubule organizing center</location>
        <location evidence="2">Centrosome</location>
    </subcellularLocation>
    <subcellularLocation>
        <location evidence="2">Chromosome</location>
        <location evidence="2">Centromere</location>
        <location evidence="2">Kinetochore</location>
    </subcellularLocation>
    <subcellularLocation>
        <location evidence="2">Cytoplasm</location>
        <location evidence="2">Cytoskeleton</location>
        <location evidence="2">Spindle</location>
    </subcellularLocation>
    <subcellularLocation>
        <location evidence="3">Golgi apparatus</location>
    </subcellularLocation>
    <subcellularLocation>
        <location evidence="2">Golgi apparatus</location>
        <location evidence="2">trans-Golgi network</location>
    </subcellularLocation>
    <subcellularLocation>
        <location evidence="2">Cell membrane</location>
    </subcellularLocation>
    <subcellularLocation>
        <location evidence="2">Cell projection</location>
        <location evidence="2">Ruffle membrane</location>
    </subcellularLocation>
    <subcellularLocation>
        <location evidence="2">Cytoplasm</location>
        <location evidence="2">Cell cortex</location>
    </subcellularLocation>
    <text evidence="2">Localizes to microtubule plus ends. Localizes to centrosomes, kinetochores and the mitotic spindle from prometaphase. Subsequently localizes to the spindle midzone from anaphase and to the midbody from telophase. In migrating cells localizes to the plus ends of microtubules within the cell body and to the entire microtubule lattice within the lamella. Localizes to the cell cortex and this requires ERC1 and PHLDB2. Colocalizes with KANK1 at the cell cortex, likely recruited in cortical microtubule stabilization complexes (CMSC) at focal adhesions rims. The MEMO1-RHOA-DIAPH1 signaling pathway controls localization of the phosphorylated form to the cell membrane (By similarity).</text>
</comment>
<comment type="domain">
    <text evidence="2">The two SXIP sequence motifs mediate interaction with MAPRE1; this is necessary for targeting to the growing microtubule plus ends.</text>
</comment>
<comment type="domain">
    <text evidence="2">Two TOG regions display structural characteristics similar to HEAT repeat domains and mediate interaction with microtubules.</text>
</comment>
<comment type="PTM">
    <text>Phosphorylated by GSK3B. Phosphorylation by GSK3B may negatively regulate binding to microtubule lattices in lamella.</text>
</comment>
<comment type="similarity">
    <text evidence="6">Belongs to the CLASP family.</text>
</comment>